<accession>Q42418</accession>
<accession>A0A178V4L3</accession>
<accession>C0Z3G0</accession>
<accession>Q8LCJ1</accession>
<accession>Q9FS48</accession>
<gene>
    <name evidence="11" type="primary">PRF2</name>
    <name evidence="12" type="synonym">PFN2</name>
    <name evidence="13" type="synonym">PRO2</name>
    <name evidence="14" type="ordered locus">At4g29350</name>
    <name evidence="15" type="ORF">F17A13.170</name>
</gene>
<dbReference type="EMBL" id="U43326">
    <property type="protein sequence ID" value="AAB39481.1"/>
    <property type="molecule type" value="mRNA"/>
</dbReference>
<dbReference type="EMBL" id="U43323">
    <property type="protein sequence ID" value="AAB39478.1"/>
    <property type="molecule type" value="Genomic_DNA"/>
</dbReference>
<dbReference type="EMBL" id="U43591">
    <property type="protein sequence ID" value="AAG10088.1"/>
    <property type="molecule type" value="mRNA"/>
</dbReference>
<dbReference type="EMBL" id="AL161574">
    <property type="protein sequence ID" value="CAB79693.1"/>
    <property type="molecule type" value="Genomic_DNA"/>
</dbReference>
<dbReference type="EMBL" id="CP002687">
    <property type="protein sequence ID" value="AEE85620.1"/>
    <property type="molecule type" value="Genomic_DNA"/>
</dbReference>
<dbReference type="EMBL" id="AY074350">
    <property type="protein sequence ID" value="AAL67046.1"/>
    <property type="molecule type" value="mRNA"/>
</dbReference>
<dbReference type="EMBL" id="AY114048">
    <property type="protein sequence ID" value="AAM45096.1"/>
    <property type="molecule type" value="mRNA"/>
</dbReference>
<dbReference type="EMBL" id="AK319124">
    <property type="protein sequence ID" value="BAH57239.1"/>
    <property type="molecule type" value="mRNA"/>
</dbReference>
<dbReference type="EMBL" id="AY086576">
    <property type="protein sequence ID" value="AAM63638.1"/>
    <property type="molecule type" value="mRNA"/>
</dbReference>
<dbReference type="PIR" id="E85342">
    <property type="entry name" value="E85342"/>
</dbReference>
<dbReference type="RefSeq" id="NP_194664.1">
    <property type="nucleotide sequence ID" value="NM_119080.4"/>
</dbReference>
<dbReference type="PDB" id="6IQI">
    <property type="method" value="X-ray"/>
    <property type="resolution" value="2.40 A"/>
    <property type="chains" value="A/B=1-131"/>
</dbReference>
<dbReference type="PDB" id="6IQJ">
    <property type="method" value="X-ray"/>
    <property type="resolution" value="1.92 A"/>
    <property type="chains" value="A/B=1-131"/>
</dbReference>
<dbReference type="PDBsum" id="6IQI"/>
<dbReference type="PDBsum" id="6IQJ"/>
<dbReference type="SMR" id="Q42418"/>
<dbReference type="BioGRID" id="14343">
    <property type="interactions" value="7"/>
</dbReference>
<dbReference type="FunCoup" id="Q42418">
    <property type="interactions" value="1412"/>
</dbReference>
<dbReference type="IntAct" id="Q42418">
    <property type="interactions" value="3"/>
</dbReference>
<dbReference type="STRING" id="3702.Q42418"/>
<dbReference type="PaxDb" id="3702-AT4G29350.1"/>
<dbReference type="ProteomicsDB" id="226374"/>
<dbReference type="EnsemblPlants" id="AT4G29350.1">
    <property type="protein sequence ID" value="AT4G29350.1"/>
    <property type="gene ID" value="AT4G29350"/>
</dbReference>
<dbReference type="GeneID" id="829056"/>
<dbReference type="Gramene" id="AT4G29350.1">
    <property type="protein sequence ID" value="AT4G29350.1"/>
    <property type="gene ID" value="AT4G29350"/>
</dbReference>
<dbReference type="KEGG" id="ath:AT4G29350"/>
<dbReference type="Araport" id="AT4G29350"/>
<dbReference type="TAIR" id="AT4G29350">
    <property type="gene designation" value="PFN2"/>
</dbReference>
<dbReference type="eggNOG" id="KOG1755">
    <property type="taxonomic scope" value="Eukaryota"/>
</dbReference>
<dbReference type="HOGENOM" id="CLU_120772_0_1_1"/>
<dbReference type="InParanoid" id="Q42418"/>
<dbReference type="OMA" id="CEVEGNH"/>
<dbReference type="OrthoDB" id="421374at2759"/>
<dbReference type="PhylomeDB" id="Q42418"/>
<dbReference type="CD-CODE" id="4299E36E">
    <property type="entry name" value="Nucleolus"/>
</dbReference>
<dbReference type="PRO" id="PR:Q42418"/>
<dbReference type="Proteomes" id="UP000006548">
    <property type="component" value="Chromosome 4"/>
</dbReference>
<dbReference type="ExpressionAtlas" id="Q42418">
    <property type="expression patterns" value="baseline and differential"/>
</dbReference>
<dbReference type="GO" id="GO:0009507">
    <property type="term" value="C:chloroplast"/>
    <property type="evidence" value="ECO:0007005"/>
    <property type="project" value="TAIR"/>
</dbReference>
<dbReference type="GO" id="GO:0005737">
    <property type="term" value="C:cytoplasm"/>
    <property type="evidence" value="ECO:0000304"/>
    <property type="project" value="TAIR"/>
</dbReference>
<dbReference type="GO" id="GO:0005856">
    <property type="term" value="C:cytoskeleton"/>
    <property type="evidence" value="ECO:0007669"/>
    <property type="project" value="UniProtKB-SubCell"/>
</dbReference>
<dbReference type="GO" id="GO:0005829">
    <property type="term" value="C:cytosol"/>
    <property type="evidence" value="ECO:0007005"/>
    <property type="project" value="TAIR"/>
</dbReference>
<dbReference type="GO" id="GO:0005783">
    <property type="term" value="C:endoplasmic reticulum"/>
    <property type="evidence" value="ECO:0007669"/>
    <property type="project" value="UniProtKB-SubCell"/>
</dbReference>
<dbReference type="GO" id="GO:0005634">
    <property type="term" value="C:nucleus"/>
    <property type="evidence" value="ECO:0007669"/>
    <property type="project" value="UniProtKB-SubCell"/>
</dbReference>
<dbReference type="GO" id="GO:0005886">
    <property type="term" value="C:plasma membrane"/>
    <property type="evidence" value="ECO:0007005"/>
    <property type="project" value="TAIR"/>
</dbReference>
<dbReference type="GO" id="GO:0003779">
    <property type="term" value="F:actin binding"/>
    <property type="evidence" value="ECO:0007669"/>
    <property type="project" value="UniProtKB-KW"/>
</dbReference>
<dbReference type="GO" id="GO:0008154">
    <property type="term" value="P:actin polymerization or depolymerization"/>
    <property type="evidence" value="ECO:0000314"/>
    <property type="project" value="TAIR"/>
</dbReference>
<dbReference type="GO" id="GO:0006952">
    <property type="term" value="P:defense response"/>
    <property type="evidence" value="ECO:0007669"/>
    <property type="project" value="UniProtKB-KW"/>
</dbReference>
<dbReference type="GO" id="GO:0010229">
    <property type="term" value="P:inflorescence development"/>
    <property type="evidence" value="ECO:0000315"/>
    <property type="project" value="TAIR"/>
</dbReference>
<dbReference type="GO" id="GO:0048527">
    <property type="term" value="P:lateral root development"/>
    <property type="evidence" value="ECO:0000315"/>
    <property type="project" value="TAIR"/>
</dbReference>
<dbReference type="GO" id="GO:0048366">
    <property type="term" value="P:leaf development"/>
    <property type="evidence" value="ECO:0000315"/>
    <property type="project" value="TAIR"/>
</dbReference>
<dbReference type="CDD" id="cd00148">
    <property type="entry name" value="PROF"/>
    <property type="match status" value="1"/>
</dbReference>
<dbReference type="FunFam" id="3.30.450.30:FF:000001">
    <property type="entry name" value="Profilin"/>
    <property type="match status" value="1"/>
</dbReference>
<dbReference type="Gene3D" id="3.30.450.30">
    <property type="entry name" value="Dynein light chain 2a, cytoplasmic"/>
    <property type="match status" value="1"/>
</dbReference>
<dbReference type="InterPro" id="IPR048278">
    <property type="entry name" value="PFN"/>
</dbReference>
<dbReference type="InterPro" id="IPR005455">
    <property type="entry name" value="PFN_euk"/>
</dbReference>
<dbReference type="InterPro" id="IPR036140">
    <property type="entry name" value="PFN_sf"/>
</dbReference>
<dbReference type="InterPro" id="IPR027310">
    <property type="entry name" value="Profilin_CS"/>
</dbReference>
<dbReference type="PANTHER" id="PTHR11604">
    <property type="entry name" value="PROFILIN"/>
    <property type="match status" value="1"/>
</dbReference>
<dbReference type="PANTHER" id="PTHR11604:SF24">
    <property type="entry name" value="PROFILIN-1-RELATED"/>
    <property type="match status" value="1"/>
</dbReference>
<dbReference type="Pfam" id="PF00235">
    <property type="entry name" value="Profilin"/>
    <property type="match status" value="1"/>
</dbReference>
<dbReference type="PRINTS" id="PR00392">
    <property type="entry name" value="PROFILIN"/>
</dbReference>
<dbReference type="PRINTS" id="PR01640">
    <property type="entry name" value="PROFILINPLNT"/>
</dbReference>
<dbReference type="SMART" id="SM00392">
    <property type="entry name" value="PROF"/>
    <property type="match status" value="1"/>
</dbReference>
<dbReference type="SUPFAM" id="SSF55770">
    <property type="entry name" value="Profilin (actin-binding protein)"/>
    <property type="match status" value="1"/>
</dbReference>
<dbReference type="PROSITE" id="PS00414">
    <property type="entry name" value="PROFILIN"/>
    <property type="match status" value="1"/>
</dbReference>
<reference key="1">
    <citation type="journal article" date="1996" name="Plant J.">
        <title>Arabidopsis profilins are functionally similar to yeast profilins: identification of a vascular bundle-specific profilin and a pollen-specific profilin.</title>
        <authorList>
            <person name="Christensen H.E.M."/>
            <person name="Ramachandran S."/>
            <person name="Tan C.T."/>
            <person name="Surana U."/>
            <person name="Dong C.H."/>
            <person name="Chua N.-H."/>
        </authorList>
    </citation>
    <scope>NUCLEOTIDE SEQUENCE [GENOMIC DNA / MRNA]</scope>
    <scope>TISSUE SPECIFICITY</scope>
    <source>
        <strain>cv. Columbia</strain>
    </source>
</reference>
<reference key="2">
    <citation type="journal article" date="1996" name="Plant Physiol.">
        <title>The Arabidopsis profilin gene family. Evidence for an ancient split between constitutive and pollen-specific profilin genes.</title>
        <authorList>
            <person name="Huang S."/>
            <person name="McDowell J.M."/>
            <person name="Weise M.J."/>
            <person name="Meagher R.B."/>
        </authorList>
    </citation>
    <scope>NUCLEOTIDE SEQUENCE [MRNA]</scope>
    <source>
        <strain>cv. Columbia</strain>
        <tissue>Flower</tissue>
    </source>
</reference>
<reference key="3">
    <citation type="journal article" date="1999" name="Nature">
        <title>Sequence and analysis of chromosome 4 of the plant Arabidopsis thaliana.</title>
        <authorList>
            <person name="Mayer K.F.X."/>
            <person name="Schueller C."/>
            <person name="Wambutt R."/>
            <person name="Murphy G."/>
            <person name="Volckaert G."/>
            <person name="Pohl T."/>
            <person name="Duesterhoeft A."/>
            <person name="Stiekema W."/>
            <person name="Entian K.-D."/>
            <person name="Terryn N."/>
            <person name="Harris B."/>
            <person name="Ansorge W."/>
            <person name="Brandt P."/>
            <person name="Grivell L.A."/>
            <person name="Rieger M."/>
            <person name="Weichselgartner M."/>
            <person name="de Simone V."/>
            <person name="Obermaier B."/>
            <person name="Mache R."/>
            <person name="Mueller M."/>
            <person name="Kreis M."/>
            <person name="Delseny M."/>
            <person name="Puigdomenech P."/>
            <person name="Watson M."/>
            <person name="Schmidtheini T."/>
            <person name="Reichert B."/>
            <person name="Portetelle D."/>
            <person name="Perez-Alonso M."/>
            <person name="Boutry M."/>
            <person name="Bancroft I."/>
            <person name="Vos P."/>
            <person name="Hoheisel J."/>
            <person name="Zimmermann W."/>
            <person name="Wedler H."/>
            <person name="Ridley P."/>
            <person name="Langham S.-A."/>
            <person name="McCullagh B."/>
            <person name="Bilham L."/>
            <person name="Robben J."/>
            <person name="van der Schueren J."/>
            <person name="Grymonprez B."/>
            <person name="Chuang Y.-J."/>
            <person name="Vandenbussche F."/>
            <person name="Braeken M."/>
            <person name="Weltjens I."/>
            <person name="Voet M."/>
            <person name="Bastiaens I."/>
            <person name="Aert R."/>
            <person name="Defoor E."/>
            <person name="Weitzenegger T."/>
            <person name="Bothe G."/>
            <person name="Ramsperger U."/>
            <person name="Hilbert H."/>
            <person name="Braun M."/>
            <person name="Holzer E."/>
            <person name="Brandt A."/>
            <person name="Peters S."/>
            <person name="van Staveren M."/>
            <person name="Dirkse W."/>
            <person name="Mooijman P."/>
            <person name="Klein Lankhorst R."/>
            <person name="Rose M."/>
            <person name="Hauf J."/>
            <person name="Koetter P."/>
            <person name="Berneiser S."/>
            <person name="Hempel S."/>
            <person name="Feldpausch M."/>
            <person name="Lamberth S."/>
            <person name="Van den Daele H."/>
            <person name="De Keyser A."/>
            <person name="Buysshaert C."/>
            <person name="Gielen J."/>
            <person name="Villarroel R."/>
            <person name="De Clercq R."/>
            <person name="van Montagu M."/>
            <person name="Rogers J."/>
            <person name="Cronin A."/>
            <person name="Quail M.A."/>
            <person name="Bray-Allen S."/>
            <person name="Clark L."/>
            <person name="Doggett J."/>
            <person name="Hall S."/>
            <person name="Kay M."/>
            <person name="Lennard N."/>
            <person name="McLay K."/>
            <person name="Mayes R."/>
            <person name="Pettett A."/>
            <person name="Rajandream M.A."/>
            <person name="Lyne M."/>
            <person name="Benes V."/>
            <person name="Rechmann S."/>
            <person name="Borkova D."/>
            <person name="Bloecker H."/>
            <person name="Scharfe M."/>
            <person name="Grimm M."/>
            <person name="Loehnert T.-H."/>
            <person name="Dose S."/>
            <person name="de Haan M."/>
            <person name="Maarse A.C."/>
            <person name="Schaefer M."/>
            <person name="Mueller-Auer S."/>
            <person name="Gabel C."/>
            <person name="Fuchs M."/>
            <person name="Fartmann B."/>
            <person name="Granderath K."/>
            <person name="Dauner D."/>
            <person name="Herzl A."/>
            <person name="Neumann S."/>
            <person name="Argiriou A."/>
            <person name="Vitale D."/>
            <person name="Liguori R."/>
            <person name="Piravandi E."/>
            <person name="Massenet O."/>
            <person name="Quigley F."/>
            <person name="Clabauld G."/>
            <person name="Muendlein A."/>
            <person name="Felber R."/>
            <person name="Schnabl S."/>
            <person name="Hiller R."/>
            <person name="Schmidt W."/>
            <person name="Lecharny A."/>
            <person name="Aubourg S."/>
            <person name="Chefdor F."/>
            <person name="Cooke R."/>
            <person name="Berger C."/>
            <person name="Monfort A."/>
            <person name="Casacuberta E."/>
            <person name="Gibbons T."/>
            <person name="Weber N."/>
            <person name="Vandenbol M."/>
            <person name="Bargues M."/>
            <person name="Terol J."/>
            <person name="Torres A."/>
            <person name="Perez-Perez A."/>
            <person name="Purnelle B."/>
            <person name="Bent E."/>
            <person name="Johnson S."/>
            <person name="Tacon D."/>
            <person name="Jesse T."/>
            <person name="Heijnen L."/>
            <person name="Schwarz S."/>
            <person name="Scholler P."/>
            <person name="Heber S."/>
            <person name="Francs P."/>
            <person name="Bielke C."/>
            <person name="Frishman D."/>
            <person name="Haase D."/>
            <person name="Lemcke K."/>
            <person name="Mewes H.-W."/>
            <person name="Stocker S."/>
            <person name="Zaccaria P."/>
            <person name="Bevan M."/>
            <person name="Wilson R.K."/>
            <person name="de la Bastide M."/>
            <person name="Habermann K."/>
            <person name="Parnell L."/>
            <person name="Dedhia N."/>
            <person name="Gnoj L."/>
            <person name="Schutz K."/>
            <person name="Huang E."/>
            <person name="Spiegel L."/>
            <person name="Sekhon M."/>
            <person name="Murray J."/>
            <person name="Sheet P."/>
            <person name="Cordes M."/>
            <person name="Abu-Threideh J."/>
            <person name="Stoneking T."/>
            <person name="Kalicki J."/>
            <person name="Graves T."/>
            <person name="Harmon G."/>
            <person name="Edwards J."/>
            <person name="Latreille P."/>
            <person name="Courtney L."/>
            <person name="Cloud J."/>
            <person name="Abbott A."/>
            <person name="Scott K."/>
            <person name="Johnson D."/>
            <person name="Minx P."/>
            <person name="Bentley D."/>
            <person name="Fulton B."/>
            <person name="Miller N."/>
            <person name="Greco T."/>
            <person name="Kemp K."/>
            <person name="Kramer J."/>
            <person name="Fulton L."/>
            <person name="Mardis E."/>
            <person name="Dante M."/>
            <person name="Pepin K."/>
            <person name="Hillier L.W."/>
            <person name="Nelson J."/>
            <person name="Spieth J."/>
            <person name="Ryan E."/>
            <person name="Andrews S."/>
            <person name="Geisel C."/>
            <person name="Layman D."/>
            <person name="Du H."/>
            <person name="Ali J."/>
            <person name="Berghoff A."/>
            <person name="Jones K."/>
            <person name="Drone K."/>
            <person name="Cotton M."/>
            <person name="Joshu C."/>
            <person name="Antonoiu B."/>
            <person name="Zidanic M."/>
            <person name="Strong C."/>
            <person name="Sun H."/>
            <person name="Lamar B."/>
            <person name="Yordan C."/>
            <person name="Ma P."/>
            <person name="Zhong J."/>
            <person name="Preston R."/>
            <person name="Vil D."/>
            <person name="Shekher M."/>
            <person name="Matero A."/>
            <person name="Shah R."/>
            <person name="Swaby I.K."/>
            <person name="O'Shaughnessy A."/>
            <person name="Rodriguez M."/>
            <person name="Hoffman J."/>
            <person name="Till S."/>
            <person name="Granat S."/>
            <person name="Shohdy N."/>
            <person name="Hasegawa A."/>
            <person name="Hameed A."/>
            <person name="Lodhi M."/>
            <person name="Johnson A."/>
            <person name="Chen E."/>
            <person name="Marra M.A."/>
            <person name="Martienssen R."/>
            <person name="McCombie W.R."/>
        </authorList>
    </citation>
    <scope>NUCLEOTIDE SEQUENCE [LARGE SCALE GENOMIC DNA]</scope>
    <source>
        <strain>cv. Columbia</strain>
    </source>
</reference>
<reference key="4">
    <citation type="journal article" date="2017" name="Plant J.">
        <title>Araport11: a complete reannotation of the Arabidopsis thaliana reference genome.</title>
        <authorList>
            <person name="Cheng C.Y."/>
            <person name="Krishnakumar V."/>
            <person name="Chan A.P."/>
            <person name="Thibaud-Nissen F."/>
            <person name="Schobel S."/>
            <person name="Town C.D."/>
        </authorList>
    </citation>
    <scope>GENOME REANNOTATION</scope>
    <source>
        <strain>cv. Columbia</strain>
    </source>
</reference>
<reference key="5">
    <citation type="journal article" date="2003" name="Science">
        <title>Empirical analysis of transcriptional activity in the Arabidopsis genome.</title>
        <authorList>
            <person name="Yamada K."/>
            <person name="Lim J."/>
            <person name="Dale J.M."/>
            <person name="Chen H."/>
            <person name="Shinn P."/>
            <person name="Palm C.J."/>
            <person name="Southwick A.M."/>
            <person name="Wu H.C."/>
            <person name="Kim C.J."/>
            <person name="Nguyen M."/>
            <person name="Pham P.K."/>
            <person name="Cheuk R.F."/>
            <person name="Karlin-Newmann G."/>
            <person name="Liu S.X."/>
            <person name="Lam B."/>
            <person name="Sakano H."/>
            <person name="Wu T."/>
            <person name="Yu G."/>
            <person name="Miranda M."/>
            <person name="Quach H.L."/>
            <person name="Tripp M."/>
            <person name="Chang C.H."/>
            <person name="Lee J.M."/>
            <person name="Toriumi M.J."/>
            <person name="Chan M.M."/>
            <person name="Tang C.C."/>
            <person name="Onodera C.S."/>
            <person name="Deng J.M."/>
            <person name="Akiyama K."/>
            <person name="Ansari Y."/>
            <person name="Arakawa T."/>
            <person name="Banh J."/>
            <person name="Banno F."/>
            <person name="Bowser L."/>
            <person name="Brooks S.Y."/>
            <person name="Carninci P."/>
            <person name="Chao Q."/>
            <person name="Choy N."/>
            <person name="Enju A."/>
            <person name="Goldsmith A.D."/>
            <person name="Gurjal M."/>
            <person name="Hansen N.F."/>
            <person name="Hayashizaki Y."/>
            <person name="Johnson-Hopson C."/>
            <person name="Hsuan V.W."/>
            <person name="Iida K."/>
            <person name="Karnes M."/>
            <person name="Khan S."/>
            <person name="Koesema E."/>
            <person name="Ishida J."/>
            <person name="Jiang P.X."/>
            <person name="Jones T."/>
            <person name="Kawai J."/>
            <person name="Kamiya A."/>
            <person name="Meyers C."/>
            <person name="Nakajima M."/>
            <person name="Narusaka M."/>
            <person name="Seki M."/>
            <person name="Sakurai T."/>
            <person name="Satou M."/>
            <person name="Tamse R."/>
            <person name="Vaysberg M."/>
            <person name="Wallender E.K."/>
            <person name="Wong C."/>
            <person name="Yamamura Y."/>
            <person name="Yuan S."/>
            <person name="Shinozaki K."/>
            <person name="Davis R.W."/>
            <person name="Theologis A."/>
            <person name="Ecker J.R."/>
        </authorList>
    </citation>
    <scope>NUCLEOTIDE SEQUENCE [LARGE SCALE MRNA]</scope>
    <source>
        <strain>cv. Columbia</strain>
    </source>
</reference>
<reference key="6">
    <citation type="journal article" date="2009" name="DNA Res.">
        <title>Analysis of multiple occurrences of alternative splicing events in Arabidopsis thaliana using novel sequenced full-length cDNAs.</title>
        <authorList>
            <person name="Iida K."/>
            <person name="Fukami-Kobayashi K."/>
            <person name="Toyoda A."/>
            <person name="Sakaki Y."/>
            <person name="Kobayashi M."/>
            <person name="Seki M."/>
            <person name="Shinozaki K."/>
        </authorList>
    </citation>
    <scope>NUCLEOTIDE SEQUENCE [LARGE SCALE MRNA]</scope>
    <source>
        <strain>cv. Columbia</strain>
    </source>
</reference>
<reference key="7">
    <citation type="submission" date="2002-03" db="EMBL/GenBank/DDBJ databases">
        <title>Full-length cDNA from Arabidopsis thaliana.</title>
        <authorList>
            <person name="Brover V.V."/>
            <person name="Troukhan M.E."/>
            <person name="Alexandrov N.A."/>
            <person name="Lu Y.-P."/>
            <person name="Flavell R.B."/>
            <person name="Feldmann K.A."/>
        </authorList>
    </citation>
    <scope>NUCLEOTIDE SEQUENCE [LARGE SCALE MRNA]</scope>
</reference>
<reference key="8">
    <citation type="journal article" date="2005" name="New Phytol.">
        <title>Arabidopsis group Ie formins localize to specific cell membrane domains, interact with actin-binding proteins and cause defects in cell expansion upon aberrant expression.</title>
        <authorList>
            <person name="Deeks M.J."/>
            <person name="Cvrckova F."/>
            <person name="Machesky L.M."/>
            <person name="Mikitova V."/>
            <person name="Ketelaar T."/>
            <person name="Zarsky V."/>
            <person name="Davies B."/>
            <person name="Hussey P.J."/>
        </authorList>
    </citation>
    <scope>FUNCTION</scope>
</reference>
<reference key="9">
    <citation type="journal article" date="2006" name="Plant Physiol.">
        <title>Distinct roles of the first introns on the expression of Arabidopsis profilin gene family members.</title>
        <authorList>
            <person name="Jeong Y.M."/>
            <person name="Mun J.H."/>
            <person name="Lee I."/>
            <person name="Woo J.C."/>
            <person name="Hong C.B."/>
            <person name="Kim S.G."/>
        </authorList>
    </citation>
    <scope>TISSUE SPECIFICITY</scope>
</reference>
<reference key="10">
    <citation type="journal article" date="2009" name="J. Integr. Plant Biol.">
        <title>Arabidopsis profilin isoforms, PRF1 and PRF2 show distinctive binding activities and subcellular distributions.</title>
        <authorList>
            <person name="Wang F."/>
            <person name="Jing Y."/>
            <person name="Wang Z."/>
            <person name="Mao T."/>
            <person name="Samaj J."/>
            <person name="Yuan M."/>
            <person name="Ren H."/>
        </authorList>
    </citation>
    <scope>FUNCTION</scope>
    <scope>SUBCELLULAR LOCATION</scope>
    <scope>TISSUE SPECIFICITY</scope>
</reference>
<reference key="11">
    <citation type="journal article" date="2011" name="J. Proteome Res.">
        <title>Proteomics on brefeldin A-treated Arabidopsis roots reveals profilin 2 as a new protein involved in the cross-talk between vesicular trafficking and the actin cytoskeleton.</title>
        <authorList>
            <person name="Takac T."/>
            <person name="Pechan T."/>
            <person name="Richter H."/>
            <person name="Mueller J."/>
            <person name="Eck C."/>
            <person name="Boehm N."/>
            <person name="Obert B."/>
            <person name="Ren H."/>
            <person name="Niehaus K."/>
            <person name="Samaj J."/>
        </authorList>
    </citation>
    <scope>IDENTIFICATION BY MASS SPECTROMETRY</scope>
    <scope>FUNCTION</scope>
    <scope>SUBCELLULAR LOCATION</scope>
    <scope>INDUCTION BY BREFELDIN A</scope>
</reference>
<reference key="12">
    <citation type="journal article" date="2015" name="BMC Plant Biol.">
        <title>Arabidopsis plants deficient in constitutive class profilins reveal independent and quantitative genetic effects.</title>
        <authorList>
            <person name="Muessar K.J."/>
            <person name="Kandasamy M.K."/>
            <person name="McKinney E.C."/>
            <person name="Meagher R.B."/>
        </authorList>
    </citation>
    <scope>DISRUPTION PHENOTYPE</scope>
</reference>
<reference key="13">
    <citation type="journal article" date="2016" name="Mol. Plant">
        <title>A processive Arabidopsis formin modulates actin filament dynamics in association with profilin.</title>
        <authorList>
            <person name="Zhang S."/>
            <person name="Liu C."/>
            <person name="Wang J."/>
            <person name="Ren Z."/>
            <person name="Staiger C.J."/>
            <person name="Ren H."/>
        </authorList>
    </citation>
    <scope>FUNCTION</scope>
</reference>
<reference key="14">
    <citation type="journal article" date="2016" name="Plant Cell Physiol.">
        <title>Distinct biochemical properties of Arabidopsis thaliana actin isoforms.</title>
        <authorList>
            <person name="Kijima S.T."/>
            <person name="Hirose K."/>
            <person name="Kong S.G."/>
            <person name="Wada M."/>
            <person name="Uyeda T.Q."/>
        </authorList>
    </citation>
    <scope>FUNCTION</scope>
</reference>
<reference key="15">
    <citation type="journal article" date="2018" name="Biochim. Biophys. Acta">
        <title>Molecular mechanism of Arabidopsis thaliana profilins as antifungal proteins.</title>
        <authorList>
            <person name="Park S.C."/>
            <person name="Kim I.R."/>
            <person name="Kim J.Y."/>
            <person name="Lee Y."/>
            <person name="Kim E.J."/>
            <person name="Jung J.H."/>
            <person name="Jung Y.J."/>
            <person name="Jang M.K."/>
            <person name="Lee J.R."/>
        </authorList>
    </citation>
    <scope>IDENTIFICATION BY MASS SPECTROMETRY</scope>
    <scope>FUNCTION</scope>
    <scope>TISSUE SPECIFICITY</scope>
</reference>
<reference key="16">
    <citation type="journal article" date="2018" name="Curr. Biol.">
        <title>Profilin negatively regulates formin-mediated actin assembly to modulate PAMP-triggered plant immunity.</title>
        <authorList>
            <person name="Sun H."/>
            <person name="Qiao Z."/>
            <person name="Chua K.P."/>
            <person name="Tursic A."/>
            <person name="Liu X."/>
            <person name="Gao Y.G."/>
            <person name="Mu Y."/>
            <person name="Hou X."/>
            <person name="Miao Y."/>
        </authorList>
    </citation>
    <scope>FUNCTION</scope>
</reference>
<organism>
    <name type="scientific">Arabidopsis thaliana</name>
    <name type="common">Mouse-ear cress</name>
    <dbReference type="NCBI Taxonomy" id="3702"/>
    <lineage>
        <taxon>Eukaryota</taxon>
        <taxon>Viridiplantae</taxon>
        <taxon>Streptophyta</taxon>
        <taxon>Embryophyta</taxon>
        <taxon>Tracheophyta</taxon>
        <taxon>Spermatophyta</taxon>
        <taxon>Magnoliopsida</taxon>
        <taxon>eudicotyledons</taxon>
        <taxon>Gunneridae</taxon>
        <taxon>Pentapetalae</taxon>
        <taxon>rosids</taxon>
        <taxon>malvids</taxon>
        <taxon>Brassicales</taxon>
        <taxon>Brassicaceae</taxon>
        <taxon>Camelineae</taxon>
        <taxon>Arabidopsis</taxon>
    </lineage>
</organism>
<name>PRF2_ARATH</name>
<proteinExistence type="evidence at protein level"/>
<keyword id="KW-0002">3D-structure</keyword>
<keyword id="KW-0009">Actin-binding</keyword>
<keyword id="KW-0963">Cytoplasm</keyword>
<keyword id="KW-0206">Cytoskeleton</keyword>
<keyword id="KW-0256">Endoplasmic reticulum</keyword>
<keyword id="KW-0539">Nucleus</keyword>
<keyword id="KW-0611">Plant defense</keyword>
<keyword id="KW-1185">Reference proteome</keyword>
<feature type="chain" id="PRO_0000199616" description="Profilin-2">
    <location>
        <begin position="1"/>
        <end position="131"/>
    </location>
</feature>
<feature type="sequence conflict" description="In Ref. 2; AAG10088." evidence="13" ref="2">
    <original>M</original>
    <variation>V</variation>
    <location>
        <position position="110"/>
    </location>
</feature>
<feature type="sequence conflict" description="In Ref. 2; AAG10088." evidence="13" ref="2">
    <original>V</original>
    <variation>F</variation>
    <location>
        <position position="118"/>
    </location>
</feature>
<feature type="helix" evidence="16">
    <location>
        <begin position="3"/>
        <end position="10"/>
    </location>
</feature>
<feature type="strand" evidence="16">
    <location>
        <begin position="21"/>
        <end position="27"/>
    </location>
</feature>
<feature type="strand" evidence="16">
    <location>
        <begin position="32"/>
        <end position="35"/>
    </location>
</feature>
<feature type="helix" evidence="16">
    <location>
        <begin position="44"/>
        <end position="55"/>
    </location>
</feature>
<feature type="turn" evidence="16">
    <location>
        <begin position="61"/>
        <end position="63"/>
    </location>
</feature>
<feature type="strand" evidence="16">
    <location>
        <begin position="65"/>
        <end position="67"/>
    </location>
</feature>
<feature type="strand" evidence="16">
    <location>
        <begin position="70"/>
        <end position="74"/>
    </location>
</feature>
<feature type="turn" evidence="16">
    <location>
        <begin position="79"/>
        <end position="81"/>
    </location>
</feature>
<feature type="strand" evidence="16">
    <location>
        <begin position="82"/>
        <end position="87"/>
    </location>
</feature>
<feature type="strand" evidence="16">
    <location>
        <begin position="90"/>
        <end position="96"/>
    </location>
</feature>
<feature type="strand" evidence="16">
    <location>
        <begin position="98"/>
        <end position="106"/>
    </location>
</feature>
<feature type="helix" evidence="16">
    <location>
        <begin position="112"/>
        <end position="128"/>
    </location>
</feature>
<protein>
    <recommendedName>
        <fullName evidence="11">Profilin-2</fullName>
    </recommendedName>
    <alternativeName>
        <fullName evidence="13">AtPROF2</fullName>
    </alternativeName>
    <alternativeName>
        <fullName evidence="11">AthPRF2</fullName>
    </alternativeName>
</protein>
<sequence length="131" mass="13998">MSWQSYVDDHLMCEVEGNHLTHAAIFGQDGSVWAQSSAFPQLKPAEIAGINKDFEEAGHLAPTGLFLGGEKYMVVQGEAGAVIRGKKGPGGVTIKKTTQALVFGIYDEPMTGGQCNLVVERLGDYLIESGL</sequence>
<evidence type="ECO:0000269" key="1">
    <source>
    </source>
</evidence>
<evidence type="ECO:0000269" key="2">
    <source>
    </source>
</evidence>
<evidence type="ECO:0000269" key="3">
    <source>
    </source>
</evidence>
<evidence type="ECO:0000269" key="4">
    <source>
    </source>
</evidence>
<evidence type="ECO:0000269" key="5">
    <source>
    </source>
</evidence>
<evidence type="ECO:0000269" key="6">
    <source>
    </source>
</evidence>
<evidence type="ECO:0000269" key="7">
    <source>
    </source>
</evidence>
<evidence type="ECO:0000269" key="8">
    <source>
    </source>
</evidence>
<evidence type="ECO:0000269" key="9">
    <source>
    </source>
</evidence>
<evidence type="ECO:0000269" key="10">
    <source>
    </source>
</evidence>
<evidence type="ECO:0000303" key="11">
    <source>
    </source>
</evidence>
<evidence type="ECO:0000303" key="12">
    <source>
    </source>
</evidence>
<evidence type="ECO:0000305" key="13"/>
<evidence type="ECO:0000312" key="14">
    <source>
        <dbReference type="Araport" id="AT4G29350"/>
    </source>
</evidence>
<evidence type="ECO:0000312" key="15">
    <source>
        <dbReference type="EMBL" id="CAB79693.1"/>
    </source>
</evidence>
<evidence type="ECO:0007829" key="16">
    <source>
        <dbReference type="PDB" id="6IQJ"/>
    </source>
</evidence>
<comment type="function">
    <text evidence="1 3 4 6 7 8 9">Binds to actin monomers and regulates the organization of the actin cytoskeleton (PubMed:21090759). At high concentrations, profilin prevents the polymerization of actin, whereas it enhances it at low concentrations (PubMed:16313636, PubMed:26996265, PubMed:29861135). At low concentrations, associates with the poly-proline motif of formins to enhance actin filament elongation rate (PubMed:29861135). Binds G-actin and poly-L-proline with low affinity in vitro (PubMed:19200149). Binds ACT1, ACT7 and ACT11 and inhibits actin polymerization (PubMed:26578694). May be involved in the cross-talk between vesicular trafficking and the actin cytoskeleton (PubMed:21090759). Inhibits cell growth of various pathogenic fungal strains (PubMed:30056100). May play a role as antifungal proteins in the defense system against fungal pathogen attacks (PubMed:30056100).</text>
</comment>
<comment type="subunit">
    <text evidence="13">Occurs in many kinds of cells as a complex with monomeric actin in a 1:1 ratio.</text>
</comment>
<comment type="subcellular location">
    <subcellularLocation>
        <location evidence="13">Cytoplasm</location>
        <location evidence="13">Cytoskeleton</location>
    </subcellularLocation>
    <subcellularLocation>
        <location evidence="3">Endoplasmic reticulum</location>
    </subcellularLocation>
    <subcellularLocation>
        <location evidence="4">Cytoplasm</location>
        <location evidence="4">Cytosol</location>
    </subcellularLocation>
    <subcellularLocation>
        <location>Nucleus</location>
    </subcellularLocation>
</comment>
<comment type="tissue specificity">
    <text evidence="2 3 9 10">Expressed in vascular bundles of roots, hypocotyls, cotyledons, leaves, sepals, petals, stamen filaments and stalks of developing seeds (PubMed:16361517, PubMed:8771785). Expressed in leaf epidermal cells, trichomes and stem epidermal cells (PubMed:19200149). Detected in phloem exudates (at protein level) (PubMed:30056100).</text>
</comment>
<comment type="induction">
    <text evidence="4">Induced by treatment with brefeldin A.</text>
</comment>
<comment type="disruption phenotype">
    <text evidence="5">Defects in rosette leaf and inflorescence development.</text>
</comment>
<comment type="similarity">
    <text evidence="13">Belongs to the profilin family.</text>
</comment>